<accession>Q1CAP6</accession>
<comment type="function">
    <text evidence="1">Catalyzes the NADPH-dependent reduction of 7-cyano-7-deazaguanine (preQ0) to 7-aminomethyl-7-deazaguanine (preQ1).</text>
</comment>
<comment type="catalytic activity">
    <reaction evidence="1">
        <text>7-aminomethyl-7-carbaguanine + 2 NADP(+) = 7-cyano-7-deazaguanine + 2 NADPH + 3 H(+)</text>
        <dbReference type="Rhea" id="RHEA:13409"/>
        <dbReference type="ChEBI" id="CHEBI:15378"/>
        <dbReference type="ChEBI" id="CHEBI:45075"/>
        <dbReference type="ChEBI" id="CHEBI:57783"/>
        <dbReference type="ChEBI" id="CHEBI:58349"/>
        <dbReference type="ChEBI" id="CHEBI:58703"/>
        <dbReference type="EC" id="1.7.1.13"/>
    </reaction>
</comment>
<comment type="pathway">
    <text evidence="1">tRNA modification; tRNA-queuosine biosynthesis.</text>
</comment>
<comment type="subunit">
    <text evidence="1">Homodimer.</text>
</comment>
<comment type="subcellular location">
    <subcellularLocation>
        <location evidence="1">Cytoplasm</location>
    </subcellularLocation>
</comment>
<comment type="similarity">
    <text evidence="1">Belongs to the GTP cyclohydrolase I family. QueF type 2 subfamily.</text>
</comment>
<evidence type="ECO:0000255" key="1">
    <source>
        <dbReference type="HAMAP-Rule" id="MF_00817"/>
    </source>
</evidence>
<organism>
    <name type="scientific">Yersinia pestis bv. Antiqua (strain Antiqua)</name>
    <dbReference type="NCBI Taxonomy" id="360102"/>
    <lineage>
        <taxon>Bacteria</taxon>
        <taxon>Pseudomonadati</taxon>
        <taxon>Pseudomonadota</taxon>
        <taxon>Gammaproteobacteria</taxon>
        <taxon>Enterobacterales</taxon>
        <taxon>Yersiniaceae</taxon>
        <taxon>Yersinia</taxon>
    </lineage>
</organism>
<name>QUEF_YERPA</name>
<feature type="chain" id="PRO_1000062370" description="NADPH-dependent 7-cyano-7-deazaguanine reductase">
    <location>
        <begin position="1"/>
        <end position="281"/>
    </location>
</feature>
<feature type="active site" description="Thioimide intermediate" evidence="1">
    <location>
        <position position="189"/>
    </location>
</feature>
<feature type="active site" description="Proton donor" evidence="1">
    <location>
        <position position="196"/>
    </location>
</feature>
<feature type="binding site" evidence="1">
    <location>
        <begin position="88"/>
        <end position="90"/>
    </location>
    <ligand>
        <name>substrate</name>
    </ligand>
</feature>
<feature type="binding site" evidence="1">
    <location>
        <begin position="90"/>
        <end position="91"/>
    </location>
    <ligand>
        <name>NADPH</name>
        <dbReference type="ChEBI" id="CHEBI:57783"/>
    </ligand>
</feature>
<feature type="binding site" evidence="1">
    <location>
        <begin position="228"/>
        <end position="229"/>
    </location>
    <ligand>
        <name>substrate</name>
    </ligand>
</feature>
<feature type="binding site" evidence="1">
    <location>
        <begin position="257"/>
        <end position="258"/>
    </location>
    <ligand>
        <name>NADPH</name>
        <dbReference type="ChEBI" id="CHEBI:57783"/>
    </ligand>
</feature>
<sequence>MSSYQNHKALAELTLGKPTAYCDYYDATLLQAVPRSMNREPLGLYPDNLPFHGADIWTLYELSWLNSNGLPQVAVGEISLNADSINLIESKSFKLYLNSFNQTIFADKESVRMTLQRDLAACAQGNVSVALYDLDEITGQPISNFNGECLDKQDIRIDSYEFNADYLQGAAGKDHVEESLVSHLLKSNCLITHQPDWGSVQIHYRGPQIDHEALLRYLVSFRHHNEFHEQCVERIFNDIMRFCQPETLTVYARYTRRGGLDINPWRSNTDFVPLTGRLARQ</sequence>
<reference key="1">
    <citation type="journal article" date="2006" name="J. Bacteriol.">
        <title>Complete genome sequence of Yersinia pestis strains Antiqua and Nepal516: evidence of gene reduction in an emerging pathogen.</title>
        <authorList>
            <person name="Chain P.S.G."/>
            <person name="Hu P."/>
            <person name="Malfatti S.A."/>
            <person name="Radnedge L."/>
            <person name="Larimer F."/>
            <person name="Vergez L.M."/>
            <person name="Worsham P."/>
            <person name="Chu M.C."/>
            <person name="Andersen G.L."/>
        </authorList>
    </citation>
    <scope>NUCLEOTIDE SEQUENCE [LARGE SCALE GENOMIC DNA]</scope>
    <source>
        <strain>Antiqua</strain>
    </source>
</reference>
<proteinExistence type="inferred from homology"/>
<gene>
    <name evidence="1" type="primary">queF</name>
    <name type="ordered locus">YPA_0508</name>
</gene>
<protein>
    <recommendedName>
        <fullName evidence="1">NADPH-dependent 7-cyano-7-deazaguanine reductase</fullName>
        <ecNumber evidence="1">1.7.1.13</ecNumber>
    </recommendedName>
    <alternativeName>
        <fullName evidence="1">7-cyano-7-carbaguanine reductase</fullName>
    </alternativeName>
    <alternativeName>
        <fullName evidence="1">NADPH-dependent nitrile oxidoreductase</fullName>
    </alternativeName>
    <alternativeName>
        <fullName evidence="1">PreQ(0) reductase</fullName>
    </alternativeName>
</protein>
<keyword id="KW-0963">Cytoplasm</keyword>
<keyword id="KW-0521">NADP</keyword>
<keyword id="KW-0560">Oxidoreductase</keyword>
<keyword id="KW-0671">Queuosine biosynthesis</keyword>
<dbReference type="EC" id="1.7.1.13" evidence="1"/>
<dbReference type="EMBL" id="CP000308">
    <property type="protein sequence ID" value="ABG12476.1"/>
    <property type="molecule type" value="Genomic_DNA"/>
</dbReference>
<dbReference type="RefSeq" id="WP_002212122.1">
    <property type="nucleotide sequence ID" value="NZ_CP009906.1"/>
</dbReference>
<dbReference type="SMR" id="Q1CAP6"/>
<dbReference type="GeneID" id="57977527"/>
<dbReference type="KEGG" id="ypa:YPA_0508"/>
<dbReference type="UniPathway" id="UPA00392"/>
<dbReference type="Proteomes" id="UP000001971">
    <property type="component" value="Chromosome"/>
</dbReference>
<dbReference type="GO" id="GO:0005737">
    <property type="term" value="C:cytoplasm"/>
    <property type="evidence" value="ECO:0007669"/>
    <property type="project" value="UniProtKB-SubCell"/>
</dbReference>
<dbReference type="GO" id="GO:0033739">
    <property type="term" value="F:preQ1 synthase activity"/>
    <property type="evidence" value="ECO:0007669"/>
    <property type="project" value="UniProtKB-UniRule"/>
</dbReference>
<dbReference type="GO" id="GO:0008616">
    <property type="term" value="P:queuosine biosynthetic process"/>
    <property type="evidence" value="ECO:0007669"/>
    <property type="project" value="UniProtKB-UniRule"/>
</dbReference>
<dbReference type="GO" id="GO:0006400">
    <property type="term" value="P:tRNA modification"/>
    <property type="evidence" value="ECO:0007669"/>
    <property type="project" value="UniProtKB-UniRule"/>
</dbReference>
<dbReference type="Gene3D" id="3.30.1130.10">
    <property type="match status" value="2"/>
</dbReference>
<dbReference type="HAMAP" id="MF_00817">
    <property type="entry name" value="QueF_type2"/>
    <property type="match status" value="1"/>
</dbReference>
<dbReference type="InterPro" id="IPR043133">
    <property type="entry name" value="GTP-CH-I_C/QueF"/>
</dbReference>
<dbReference type="InterPro" id="IPR050084">
    <property type="entry name" value="NADPH_dep_7-cyano-7-deazaG_red"/>
</dbReference>
<dbReference type="InterPro" id="IPR029500">
    <property type="entry name" value="QueF"/>
</dbReference>
<dbReference type="InterPro" id="IPR029139">
    <property type="entry name" value="QueF_N"/>
</dbReference>
<dbReference type="InterPro" id="IPR016428">
    <property type="entry name" value="QueF_type2"/>
</dbReference>
<dbReference type="NCBIfam" id="TIGR03138">
    <property type="entry name" value="QueF"/>
    <property type="match status" value="1"/>
</dbReference>
<dbReference type="PANTHER" id="PTHR34354">
    <property type="entry name" value="NADPH-DEPENDENT 7-CYANO-7-DEAZAGUANINE REDUCTASE"/>
    <property type="match status" value="1"/>
</dbReference>
<dbReference type="PANTHER" id="PTHR34354:SF1">
    <property type="entry name" value="NADPH-DEPENDENT 7-CYANO-7-DEAZAGUANINE REDUCTASE"/>
    <property type="match status" value="1"/>
</dbReference>
<dbReference type="Pfam" id="PF14489">
    <property type="entry name" value="QueF"/>
    <property type="match status" value="1"/>
</dbReference>
<dbReference type="Pfam" id="PF14819">
    <property type="entry name" value="QueF_N"/>
    <property type="match status" value="1"/>
</dbReference>
<dbReference type="PIRSF" id="PIRSF004750">
    <property type="entry name" value="Nitrile_oxidored_YqcD_prd"/>
    <property type="match status" value="1"/>
</dbReference>
<dbReference type="SUPFAM" id="SSF55620">
    <property type="entry name" value="Tetrahydrobiopterin biosynthesis enzymes-like"/>
    <property type="match status" value="1"/>
</dbReference>